<reference key="1">
    <citation type="journal article" date="2003" name="PLoS Biol.">
        <title>The genome sequence of Caenorhabditis briggsae: a platform for comparative genomics.</title>
        <authorList>
            <person name="Stein L.D."/>
            <person name="Bao Z."/>
            <person name="Blasiar D."/>
            <person name="Blumenthal T."/>
            <person name="Brent M.R."/>
            <person name="Chen N."/>
            <person name="Chinwalla A."/>
            <person name="Clarke L."/>
            <person name="Clee C."/>
            <person name="Coghlan A."/>
            <person name="Coulson A."/>
            <person name="D'Eustachio P."/>
            <person name="Fitch D.H.A."/>
            <person name="Fulton L.A."/>
            <person name="Fulton R.E."/>
            <person name="Griffiths-Jones S."/>
            <person name="Harris T.W."/>
            <person name="Hillier L.W."/>
            <person name="Kamath R."/>
            <person name="Kuwabara P.E."/>
            <person name="Mardis E.R."/>
            <person name="Marra M.A."/>
            <person name="Miner T.L."/>
            <person name="Minx P."/>
            <person name="Mullikin J.C."/>
            <person name="Plumb R.W."/>
            <person name="Rogers J."/>
            <person name="Schein J.E."/>
            <person name="Sohrmann M."/>
            <person name="Spieth J."/>
            <person name="Stajich J.E."/>
            <person name="Wei C."/>
            <person name="Willey D."/>
            <person name="Wilson R.K."/>
            <person name="Durbin R.M."/>
            <person name="Waterston R.H."/>
        </authorList>
    </citation>
    <scope>NUCLEOTIDE SEQUENCE [LARGE SCALE GENOMIC DNA]</scope>
    <source>
        <strain>AF16</strain>
    </source>
</reference>
<sequence length="397" mass="45954">MSLGKDRYSLPRSYKRVSHAKEKARPELRKFGWDTLGYAESFNPPPLKDTIPRVDGKKISVDEFRRDFERPRIPVILTGLTDDWNAHEKWTLERLSKKYRNQNFKCGEDDHGNSVRMKMKYYHDYMLNNRDDSPLYIFDSSFAERRKTKKLSEDYKVPKFFEDDLFHYADHKKRPPHRWFVMGPARSGTAIHIDPLGTSAWNSLLLGYKRWVLIPPNAPRDLVKPMAHEKGKHPDEGITWFQTVYKRVRSPAWPKEYAPIECRQGPGETMFVPSGWWHVVINEGLTVAVTHNYCSVENLHLVWPKTVRGRPKLSKHWHRKLAESRPEVLKIINSCTDTPPQSLNDSSSDSSSSSSSSDDSSDSETEEDSGRCGLGNRKRRNDVCTSECPEKISNSMV</sequence>
<feature type="chain" id="PRO_0000129377" description="Bifunctional arginine demethylase and lysyl-hydroxylase psr-1">
    <location>
        <begin position="1"/>
        <end position="397"/>
    </location>
</feature>
<feature type="domain" description="JmjC" evidence="2">
    <location>
        <begin position="146"/>
        <end position="310"/>
    </location>
</feature>
<feature type="region of interest" description="Disordered" evidence="3">
    <location>
        <begin position="334"/>
        <end position="383"/>
    </location>
</feature>
<feature type="compositionally biased region" description="Polar residues" evidence="3">
    <location>
        <begin position="334"/>
        <end position="344"/>
    </location>
</feature>
<feature type="compositionally biased region" description="Low complexity" evidence="3">
    <location>
        <begin position="345"/>
        <end position="358"/>
    </location>
</feature>
<feature type="binding site" evidence="1">
    <location>
        <position position="189"/>
    </location>
    <ligand>
        <name>substrate</name>
    </ligand>
</feature>
<feature type="binding site" evidence="2">
    <location>
        <position position="192"/>
    </location>
    <ligand>
        <name>Fe cation</name>
        <dbReference type="ChEBI" id="CHEBI:24875"/>
        <note>catalytic</note>
    </ligand>
</feature>
<feature type="binding site" evidence="2">
    <location>
        <position position="194"/>
    </location>
    <ligand>
        <name>Fe cation</name>
        <dbReference type="ChEBI" id="CHEBI:24875"/>
        <note>catalytic</note>
    </ligand>
</feature>
<feature type="binding site" evidence="1">
    <location>
        <position position="202"/>
    </location>
    <ligand>
        <name>2-oxoglutarate</name>
        <dbReference type="ChEBI" id="CHEBI:16810"/>
    </ligand>
</feature>
<feature type="binding site" evidence="1">
    <location>
        <position position="209"/>
    </location>
    <ligand>
        <name>substrate</name>
    </ligand>
</feature>
<feature type="binding site" evidence="2">
    <location>
        <position position="278"/>
    </location>
    <ligand>
        <name>Fe cation</name>
        <dbReference type="ChEBI" id="CHEBI:24875"/>
        <note>catalytic</note>
    </ligand>
</feature>
<feature type="binding site" evidence="1">
    <location>
        <position position="290"/>
    </location>
    <ligand>
        <name>2-oxoglutarate</name>
        <dbReference type="ChEBI" id="CHEBI:16810"/>
    </ligand>
</feature>
<gene>
    <name type="primary">psr-1</name>
    <name type="ORF">CBG01722</name>
</gene>
<evidence type="ECO:0000250" key="1"/>
<evidence type="ECO:0000255" key="2">
    <source>
        <dbReference type="PROSITE-ProRule" id="PRU00538"/>
    </source>
</evidence>
<evidence type="ECO:0000256" key="3">
    <source>
        <dbReference type="SAM" id="MobiDB-lite"/>
    </source>
</evidence>
<evidence type="ECO:0000305" key="4"/>
<keyword id="KW-0156">Chromatin regulator</keyword>
<keyword id="KW-0223">Dioxygenase</keyword>
<keyword id="KW-0408">Iron</keyword>
<keyword id="KW-0479">Metal-binding</keyword>
<keyword id="KW-0539">Nucleus</keyword>
<keyword id="KW-0560">Oxidoreductase</keyword>
<keyword id="KW-1185">Reference proteome</keyword>
<keyword id="KW-0804">Transcription</keyword>
<keyword id="KW-0805">Transcription regulation</keyword>
<dbReference type="EC" id="1.14.11.-"/>
<dbReference type="EMBL" id="HE601298">
    <property type="protein sequence ID" value="CAP22909.1"/>
    <property type="molecule type" value="Genomic_DNA"/>
</dbReference>
<dbReference type="SMR" id="Q623U2"/>
<dbReference type="FunCoup" id="Q623U2">
    <property type="interactions" value="2077"/>
</dbReference>
<dbReference type="STRING" id="6238.Q623U2"/>
<dbReference type="KEGG" id="cbr:CBG_01722"/>
<dbReference type="CTD" id="8576153"/>
<dbReference type="WormBase" id="CBG01722">
    <property type="protein sequence ID" value="CBP44155"/>
    <property type="gene ID" value="WBGene00024914"/>
    <property type="gene designation" value="Cbr-psr-1"/>
</dbReference>
<dbReference type="eggNOG" id="KOG2130">
    <property type="taxonomic scope" value="Eukaryota"/>
</dbReference>
<dbReference type="HOGENOM" id="CLU_016785_8_0_1"/>
<dbReference type="InParanoid" id="Q623U2"/>
<dbReference type="OMA" id="NAWVAMR"/>
<dbReference type="Proteomes" id="UP000008549">
    <property type="component" value="Unassembled WGS sequence"/>
</dbReference>
<dbReference type="GO" id="GO:0005737">
    <property type="term" value="C:cytoplasm"/>
    <property type="evidence" value="ECO:0000318"/>
    <property type="project" value="GO_Central"/>
</dbReference>
<dbReference type="GO" id="GO:0005634">
    <property type="term" value="C:nucleus"/>
    <property type="evidence" value="ECO:0000250"/>
    <property type="project" value="UniProtKB"/>
</dbReference>
<dbReference type="GO" id="GO:0033749">
    <property type="term" value="F:histone H4R3 demethylase activity"/>
    <property type="evidence" value="ECO:0000318"/>
    <property type="project" value="GO_Central"/>
</dbReference>
<dbReference type="GO" id="GO:0046872">
    <property type="term" value="F:metal ion binding"/>
    <property type="evidence" value="ECO:0007669"/>
    <property type="project" value="UniProtKB-KW"/>
</dbReference>
<dbReference type="GO" id="GO:0106140">
    <property type="term" value="F:P-TEFb complex binding"/>
    <property type="evidence" value="ECO:0000318"/>
    <property type="project" value="GO_Central"/>
</dbReference>
<dbReference type="GO" id="GO:0070815">
    <property type="term" value="F:peptidyl-lysine 5-dioxygenase activity"/>
    <property type="evidence" value="ECO:0000250"/>
    <property type="project" value="UniProtKB"/>
</dbReference>
<dbReference type="GO" id="GO:0018395">
    <property type="term" value="P:peptidyl-lysine hydroxylation to 5-hydroxy-L-lysine"/>
    <property type="evidence" value="ECO:0000250"/>
    <property type="project" value="UniProtKB"/>
</dbReference>
<dbReference type="GO" id="GO:0006909">
    <property type="term" value="P:phagocytosis"/>
    <property type="evidence" value="ECO:0000318"/>
    <property type="project" value="GO_Central"/>
</dbReference>
<dbReference type="Gene3D" id="1.20.1280.270">
    <property type="match status" value="1"/>
</dbReference>
<dbReference type="Gene3D" id="2.60.120.650">
    <property type="entry name" value="Cupin"/>
    <property type="match status" value="1"/>
</dbReference>
<dbReference type="InterPro" id="IPR003347">
    <property type="entry name" value="JmjC_dom"/>
</dbReference>
<dbReference type="InterPro" id="IPR050910">
    <property type="entry name" value="JMJD6_ArgDemeth/LysHydrox"/>
</dbReference>
<dbReference type="PANTHER" id="PTHR12480">
    <property type="entry name" value="ARGININE DEMETHYLASE AND LYSYL-HYDROXYLASE JMJD"/>
    <property type="match status" value="1"/>
</dbReference>
<dbReference type="PANTHER" id="PTHR12480:SF32">
    <property type="entry name" value="BIFUNCTIONAL ARGININE DEMETHYLASE AND LYSYL-HYDROXYLASE JMJD6"/>
    <property type="match status" value="1"/>
</dbReference>
<dbReference type="Pfam" id="PF02373">
    <property type="entry name" value="JmjC"/>
    <property type="match status" value="1"/>
</dbReference>
<dbReference type="SMART" id="SM00558">
    <property type="entry name" value="JmjC"/>
    <property type="match status" value="1"/>
</dbReference>
<dbReference type="SUPFAM" id="SSF51197">
    <property type="entry name" value="Clavaminate synthase-like"/>
    <property type="match status" value="1"/>
</dbReference>
<dbReference type="PROSITE" id="PS51184">
    <property type="entry name" value="JMJC"/>
    <property type="match status" value="1"/>
</dbReference>
<comment type="function">
    <text evidence="1">Dioxygenase that can both act as a histone arginine demethylase and a lysyl-hydroxylase.</text>
</comment>
<comment type="cofactor">
    <cofactor evidence="1">
        <name>Fe(2+)</name>
        <dbReference type="ChEBI" id="CHEBI:29033"/>
    </cofactor>
    <text evidence="1">Binds 1 Fe(2+) ion per subunit.</text>
</comment>
<comment type="subunit">
    <text evidence="1">Interacts with ced-5 and ced-12.</text>
</comment>
<comment type="subcellular location">
    <subcellularLocation>
        <location evidence="1">Nucleus</location>
    </subcellularLocation>
</comment>
<comment type="similarity">
    <text evidence="4">Belongs to the JMJD6 family.</text>
</comment>
<proteinExistence type="inferred from homology"/>
<protein>
    <recommendedName>
        <fullName>Bifunctional arginine demethylase and lysyl-hydroxylase psr-1</fullName>
        <ecNumber>1.14.11.-</ecNumber>
    </recommendedName>
    <alternativeName>
        <fullName>Phosphatidylserine receptor 1</fullName>
    </alternativeName>
</protein>
<organism>
    <name type="scientific">Caenorhabditis briggsae</name>
    <dbReference type="NCBI Taxonomy" id="6238"/>
    <lineage>
        <taxon>Eukaryota</taxon>
        <taxon>Metazoa</taxon>
        <taxon>Ecdysozoa</taxon>
        <taxon>Nematoda</taxon>
        <taxon>Chromadorea</taxon>
        <taxon>Rhabditida</taxon>
        <taxon>Rhabditina</taxon>
        <taxon>Rhabditomorpha</taxon>
        <taxon>Rhabditoidea</taxon>
        <taxon>Rhabditidae</taxon>
        <taxon>Peloderinae</taxon>
        <taxon>Caenorhabditis</taxon>
    </lineage>
</organism>
<accession>Q623U2</accession>
<accession>A8WR01</accession>
<name>JMJD6_CAEBR</name>